<keyword id="KW-0027">Amidation</keyword>
<keyword id="KW-0165">Cleavage on pair of basic residues</keyword>
<keyword id="KW-0903">Direct protein sequencing</keyword>
<keyword id="KW-0527">Neuropeptide</keyword>
<keyword id="KW-1185">Reference proteome</keyword>
<keyword id="KW-0964">Secreted</keyword>
<keyword id="KW-0732">Signal</keyword>
<gene>
    <name type="primary">AstA</name>
    <name type="synonym">Ast</name>
    <name type="ORF">CG13633</name>
</gene>
<protein>
    <recommendedName>
        <fullName>Allatostatin-A</fullName>
    </recommendedName>
    <alternativeName>
        <fullName>Allatostatins Ast</fullName>
    </alternativeName>
    <component>
        <recommendedName>
            <fullName>Drostatin-1</fullName>
        </recommendedName>
        <alternativeName>
            <fullName evidence="6">AST-A1</fullName>
        </alternativeName>
    </component>
    <component>
        <recommendedName>
            <fullName>Drostatin-2</fullName>
        </recommendedName>
        <alternativeName>
            <fullName evidence="6">AST-A2(14-21)</fullName>
        </alternativeName>
    </component>
    <component>
        <recommendedName>
            <fullName>Drostatin-3</fullName>
        </recommendedName>
        <alternativeName>
            <fullName evidence="6">AST-A3</fullName>
        </alternativeName>
    </component>
    <component>
        <recommendedName>
            <fullName>Drostatin-4</fullName>
        </recommendedName>
        <alternativeName>
            <fullName evidence="6">AST-A4</fullName>
        </alternativeName>
    </component>
    <component>
        <recommendedName>
            <fullName>Drostatin-5</fullName>
        </recommendedName>
        <alternativeName>
            <fullName evidence="6">AST-A2(1-11)</fullName>
        </alternativeName>
    </component>
</protein>
<evidence type="ECO:0000250" key="1"/>
<evidence type="ECO:0000255" key="2"/>
<evidence type="ECO:0000256" key="3">
    <source>
        <dbReference type="SAM" id="MobiDB-lite"/>
    </source>
</evidence>
<evidence type="ECO:0000269" key="4">
    <source>
    </source>
</evidence>
<evidence type="ECO:0000269" key="5">
    <source>
    </source>
</evidence>
<evidence type="ECO:0000303" key="6">
    <source>
    </source>
</evidence>
<evidence type="ECO:0000305" key="7"/>
<accession>Q9VC44</accession>
<accession>Q9NB67</accession>
<name>ALLS_DROME</name>
<reference key="1">
    <citation type="journal article" date="2000" name="Biochem. Biophys. Res. Commun.">
        <title>Molecular cloning and genomic organization of an Allatostatin preprohormone from Drosophila melanogaster.</title>
        <authorList>
            <person name="Lenz C."/>
            <person name="Williamson M."/>
            <person name="Grimmelikhuijzen C.J.P."/>
        </authorList>
    </citation>
    <scope>NUCLEOTIDE SEQUENCE [MRNA]</scope>
    <source>
        <strain>Canton-S</strain>
    </source>
</reference>
<reference key="2">
    <citation type="journal article" date="2000" name="Science">
        <title>The genome sequence of Drosophila melanogaster.</title>
        <authorList>
            <person name="Adams M.D."/>
            <person name="Celniker S.E."/>
            <person name="Holt R.A."/>
            <person name="Evans C.A."/>
            <person name="Gocayne J.D."/>
            <person name="Amanatides P.G."/>
            <person name="Scherer S.E."/>
            <person name="Li P.W."/>
            <person name="Hoskins R.A."/>
            <person name="Galle R.F."/>
            <person name="George R.A."/>
            <person name="Lewis S.E."/>
            <person name="Richards S."/>
            <person name="Ashburner M."/>
            <person name="Henderson S.N."/>
            <person name="Sutton G.G."/>
            <person name="Wortman J.R."/>
            <person name="Yandell M.D."/>
            <person name="Zhang Q."/>
            <person name="Chen L.X."/>
            <person name="Brandon R.C."/>
            <person name="Rogers Y.-H.C."/>
            <person name="Blazej R.G."/>
            <person name="Champe M."/>
            <person name="Pfeiffer B.D."/>
            <person name="Wan K.H."/>
            <person name="Doyle C."/>
            <person name="Baxter E.G."/>
            <person name="Helt G."/>
            <person name="Nelson C.R."/>
            <person name="Miklos G.L.G."/>
            <person name="Abril J.F."/>
            <person name="Agbayani A."/>
            <person name="An H.-J."/>
            <person name="Andrews-Pfannkoch C."/>
            <person name="Baldwin D."/>
            <person name="Ballew R.M."/>
            <person name="Basu A."/>
            <person name="Baxendale J."/>
            <person name="Bayraktaroglu L."/>
            <person name="Beasley E.M."/>
            <person name="Beeson K.Y."/>
            <person name="Benos P.V."/>
            <person name="Berman B.P."/>
            <person name="Bhandari D."/>
            <person name="Bolshakov S."/>
            <person name="Borkova D."/>
            <person name="Botchan M.R."/>
            <person name="Bouck J."/>
            <person name="Brokstein P."/>
            <person name="Brottier P."/>
            <person name="Burtis K.C."/>
            <person name="Busam D.A."/>
            <person name="Butler H."/>
            <person name="Cadieu E."/>
            <person name="Center A."/>
            <person name="Chandra I."/>
            <person name="Cherry J.M."/>
            <person name="Cawley S."/>
            <person name="Dahlke C."/>
            <person name="Davenport L.B."/>
            <person name="Davies P."/>
            <person name="de Pablos B."/>
            <person name="Delcher A."/>
            <person name="Deng Z."/>
            <person name="Mays A.D."/>
            <person name="Dew I."/>
            <person name="Dietz S.M."/>
            <person name="Dodson K."/>
            <person name="Doup L.E."/>
            <person name="Downes M."/>
            <person name="Dugan-Rocha S."/>
            <person name="Dunkov B.C."/>
            <person name="Dunn P."/>
            <person name="Durbin K.J."/>
            <person name="Evangelista C.C."/>
            <person name="Ferraz C."/>
            <person name="Ferriera S."/>
            <person name="Fleischmann W."/>
            <person name="Fosler C."/>
            <person name="Gabrielian A.E."/>
            <person name="Garg N.S."/>
            <person name="Gelbart W.M."/>
            <person name="Glasser K."/>
            <person name="Glodek A."/>
            <person name="Gong F."/>
            <person name="Gorrell J.H."/>
            <person name="Gu Z."/>
            <person name="Guan P."/>
            <person name="Harris M."/>
            <person name="Harris N.L."/>
            <person name="Harvey D.A."/>
            <person name="Heiman T.J."/>
            <person name="Hernandez J.R."/>
            <person name="Houck J."/>
            <person name="Hostin D."/>
            <person name="Houston K.A."/>
            <person name="Howland T.J."/>
            <person name="Wei M.-H."/>
            <person name="Ibegwam C."/>
            <person name="Jalali M."/>
            <person name="Kalush F."/>
            <person name="Karpen G.H."/>
            <person name="Ke Z."/>
            <person name="Kennison J.A."/>
            <person name="Ketchum K.A."/>
            <person name="Kimmel B.E."/>
            <person name="Kodira C.D."/>
            <person name="Kraft C.L."/>
            <person name="Kravitz S."/>
            <person name="Kulp D."/>
            <person name="Lai Z."/>
            <person name="Lasko P."/>
            <person name="Lei Y."/>
            <person name="Levitsky A.A."/>
            <person name="Li J.H."/>
            <person name="Li Z."/>
            <person name="Liang Y."/>
            <person name="Lin X."/>
            <person name="Liu X."/>
            <person name="Mattei B."/>
            <person name="McIntosh T.C."/>
            <person name="McLeod M.P."/>
            <person name="McPherson D."/>
            <person name="Merkulov G."/>
            <person name="Milshina N.V."/>
            <person name="Mobarry C."/>
            <person name="Morris J."/>
            <person name="Moshrefi A."/>
            <person name="Mount S.M."/>
            <person name="Moy M."/>
            <person name="Murphy B."/>
            <person name="Murphy L."/>
            <person name="Muzny D.M."/>
            <person name="Nelson D.L."/>
            <person name="Nelson D.R."/>
            <person name="Nelson K.A."/>
            <person name="Nixon K."/>
            <person name="Nusskern D.R."/>
            <person name="Pacleb J.M."/>
            <person name="Palazzolo M."/>
            <person name="Pittman G.S."/>
            <person name="Pan S."/>
            <person name="Pollard J."/>
            <person name="Puri V."/>
            <person name="Reese M.G."/>
            <person name="Reinert K."/>
            <person name="Remington K."/>
            <person name="Saunders R.D.C."/>
            <person name="Scheeler F."/>
            <person name="Shen H."/>
            <person name="Shue B.C."/>
            <person name="Siden-Kiamos I."/>
            <person name="Simpson M."/>
            <person name="Skupski M.P."/>
            <person name="Smith T.J."/>
            <person name="Spier E."/>
            <person name="Spradling A.C."/>
            <person name="Stapleton M."/>
            <person name="Strong R."/>
            <person name="Sun E."/>
            <person name="Svirskas R."/>
            <person name="Tector C."/>
            <person name="Turner R."/>
            <person name="Venter E."/>
            <person name="Wang A.H."/>
            <person name="Wang X."/>
            <person name="Wang Z.-Y."/>
            <person name="Wassarman D.A."/>
            <person name="Weinstock G.M."/>
            <person name="Weissenbach J."/>
            <person name="Williams S.M."/>
            <person name="Woodage T."/>
            <person name="Worley K.C."/>
            <person name="Wu D."/>
            <person name="Yang S."/>
            <person name="Yao Q.A."/>
            <person name="Ye J."/>
            <person name="Yeh R.-F."/>
            <person name="Zaveri J.S."/>
            <person name="Zhan M."/>
            <person name="Zhang G."/>
            <person name="Zhao Q."/>
            <person name="Zheng L."/>
            <person name="Zheng X.H."/>
            <person name="Zhong F.N."/>
            <person name="Zhong W."/>
            <person name="Zhou X."/>
            <person name="Zhu S.C."/>
            <person name="Zhu X."/>
            <person name="Smith H.O."/>
            <person name="Gibbs R.A."/>
            <person name="Myers E.W."/>
            <person name="Rubin G.M."/>
            <person name="Venter J.C."/>
        </authorList>
    </citation>
    <scope>NUCLEOTIDE SEQUENCE [LARGE SCALE GENOMIC DNA]</scope>
    <source>
        <strain>Berkeley</strain>
    </source>
</reference>
<reference key="3">
    <citation type="journal article" date="2002" name="Genome Biol.">
        <title>Annotation of the Drosophila melanogaster euchromatic genome: a systematic review.</title>
        <authorList>
            <person name="Misra S."/>
            <person name="Crosby M.A."/>
            <person name="Mungall C.J."/>
            <person name="Matthews B.B."/>
            <person name="Campbell K.S."/>
            <person name="Hradecky P."/>
            <person name="Huang Y."/>
            <person name="Kaminker J.S."/>
            <person name="Millburn G.H."/>
            <person name="Prochnik S.E."/>
            <person name="Smith C.D."/>
            <person name="Tupy J.L."/>
            <person name="Whitfield E.J."/>
            <person name="Bayraktaroglu L."/>
            <person name="Berman B.P."/>
            <person name="Bettencourt B.R."/>
            <person name="Celniker S.E."/>
            <person name="de Grey A.D.N.J."/>
            <person name="Drysdale R.A."/>
            <person name="Harris N.L."/>
            <person name="Richter J."/>
            <person name="Russo S."/>
            <person name="Schroeder A.J."/>
            <person name="Shu S.Q."/>
            <person name="Stapleton M."/>
            <person name="Yamada C."/>
            <person name="Ashburner M."/>
            <person name="Gelbart W.M."/>
            <person name="Rubin G.M."/>
            <person name="Lewis S.E."/>
        </authorList>
    </citation>
    <scope>GENOME REANNOTATION</scope>
    <source>
        <strain>Berkeley</strain>
    </source>
</reference>
<reference key="4">
    <citation type="journal article" date="2002" name="Genome Biol.">
        <title>A Drosophila full-length cDNA resource.</title>
        <authorList>
            <person name="Stapleton M."/>
            <person name="Carlson J.W."/>
            <person name="Brokstein P."/>
            <person name="Yu C."/>
            <person name="Champe M."/>
            <person name="George R.A."/>
            <person name="Guarin H."/>
            <person name="Kronmiller B."/>
            <person name="Pacleb J.M."/>
            <person name="Park S."/>
            <person name="Wan K.H."/>
            <person name="Rubin G.M."/>
            <person name="Celniker S.E."/>
        </authorList>
    </citation>
    <scope>NUCLEOTIDE SEQUENCE [LARGE SCALE MRNA]</scope>
    <source>
        <strain>Berkeley</strain>
        <tissue>Embryo</tissue>
    </source>
</reference>
<reference key="5">
    <citation type="journal article" date="2011" name="J. Proteome Res.">
        <title>Peptidomics and peptide hormone processing in the Drosophila midgut.</title>
        <authorList>
            <person name="Reiher W."/>
            <person name="Shirras C."/>
            <person name="Kahnt J."/>
            <person name="Baumeister S."/>
            <person name="Isaac R.E."/>
            <person name="Wegener C."/>
        </authorList>
    </citation>
    <scope>PROTEIN SEQUENCE OF 57-64; 68-78; 81-88; 92-99 AND 138-148</scope>
    <scope>IDENTIFICATION BY MASS SPECTROMETRY</scope>
    <scope>MASS SPECTROMETRY</scope>
    <scope>AMIDATION AT LEU-64; LEU-88; LEU-99 AND LEU-148</scope>
    <source>
        <tissue evidence="6">Midgut</tissue>
    </source>
</reference>
<reference key="6">
    <citation type="journal article" date="2002" name="J. Biol. Chem.">
        <title>Peptidomics of the larval Drosophila melanogaster central nervous system.</title>
        <authorList>
            <person name="Baggerman G."/>
            <person name="Cerstiaens A."/>
            <person name="De Loof A."/>
            <person name="Schoofs L."/>
        </authorList>
    </citation>
    <scope>PROTEIN SEQUENCE OF 68-78; 92-99 AND 138-148</scope>
    <scope>AMIDATION</scope>
    <source>
        <tissue>Larva</tissue>
    </source>
</reference>
<sequence length="151" mass="16852">MNSLHAHLLLLAVCCVGYIASSPVIGQDQRSGDSDADVLLAADEMADNGGDNIDKRVERYAFGLGRRAYMYTNGGPGMKRLPVYNFGLGKRSRPYSFGLGKRSDYDYDQDNEIDYRVPPANYLAAERAVRPGRQNKRTTRPQPFNFGLGRR</sequence>
<dbReference type="EMBL" id="AF263923">
    <property type="protein sequence ID" value="AAF97792.1"/>
    <property type="molecule type" value="mRNA"/>
</dbReference>
<dbReference type="EMBL" id="AE014297">
    <property type="protein sequence ID" value="AAF56331.1"/>
    <property type="molecule type" value="Genomic_DNA"/>
</dbReference>
<dbReference type="EMBL" id="AY071110">
    <property type="protein sequence ID" value="AAL48732.1"/>
    <property type="molecule type" value="mRNA"/>
</dbReference>
<dbReference type="PIR" id="JC7325">
    <property type="entry name" value="JC7325"/>
</dbReference>
<dbReference type="RefSeq" id="NP_001287511.1">
    <property type="nucleotide sequence ID" value="NM_001300582.1"/>
</dbReference>
<dbReference type="RefSeq" id="NP_524489.2">
    <property type="nucleotide sequence ID" value="NM_079765.3"/>
</dbReference>
<dbReference type="FunCoup" id="Q9VC44">
    <property type="interactions" value="53"/>
</dbReference>
<dbReference type="STRING" id="7227.FBpp0084119"/>
<dbReference type="PaxDb" id="7227-FBpp0084119"/>
<dbReference type="DNASU" id="42947"/>
<dbReference type="EnsemblMetazoa" id="FBtr0084744">
    <property type="protein sequence ID" value="FBpp0084119"/>
    <property type="gene ID" value="FBgn0015591"/>
</dbReference>
<dbReference type="EnsemblMetazoa" id="FBtr0346367">
    <property type="protein sequence ID" value="FBpp0312068"/>
    <property type="gene ID" value="FBgn0015591"/>
</dbReference>
<dbReference type="GeneID" id="42947"/>
<dbReference type="KEGG" id="dme:Dmel_CG13633"/>
<dbReference type="UCSC" id="CG13633-RA">
    <property type="organism name" value="d. melanogaster"/>
</dbReference>
<dbReference type="AGR" id="FB:FBgn0015591"/>
<dbReference type="CTD" id="42947"/>
<dbReference type="FlyBase" id="FBgn0015591">
    <property type="gene designation" value="AstA"/>
</dbReference>
<dbReference type="VEuPathDB" id="VectorBase:FBgn0015591"/>
<dbReference type="eggNOG" id="ENOG502SDVK">
    <property type="taxonomic scope" value="Eukaryota"/>
</dbReference>
<dbReference type="HOGENOM" id="CLU_1715176_0_0_1"/>
<dbReference type="InParanoid" id="Q9VC44"/>
<dbReference type="OMA" id="CLGYVCC"/>
<dbReference type="OrthoDB" id="10067964at2759"/>
<dbReference type="PhylomeDB" id="Q9VC44"/>
<dbReference type="BioGRID-ORCS" id="42947">
    <property type="hits" value="0 hits in 1 CRISPR screen"/>
</dbReference>
<dbReference type="GenomeRNAi" id="42947"/>
<dbReference type="PRO" id="PR:Q9VC44"/>
<dbReference type="Proteomes" id="UP000000803">
    <property type="component" value="Chromosome 3R"/>
</dbReference>
<dbReference type="Bgee" id="FBgn0015591">
    <property type="expression patterns" value="Expressed in adult posterior midgut class I enteroendocrine cell in adult midgut (Drosophila) and 56 other cell types or tissues"/>
</dbReference>
<dbReference type="ExpressionAtlas" id="Q9VC44">
    <property type="expression patterns" value="baseline and differential"/>
</dbReference>
<dbReference type="GO" id="GO:0005615">
    <property type="term" value="C:extracellular space"/>
    <property type="evidence" value="ECO:0000314"/>
    <property type="project" value="FlyBase"/>
</dbReference>
<dbReference type="GO" id="GO:0005179">
    <property type="term" value="F:hormone activity"/>
    <property type="evidence" value="ECO:0000303"/>
    <property type="project" value="FlyBase"/>
</dbReference>
<dbReference type="GO" id="GO:0005184">
    <property type="term" value="F:neuropeptide hormone activity"/>
    <property type="evidence" value="ECO:0000303"/>
    <property type="project" value="FlyBase"/>
</dbReference>
<dbReference type="GO" id="GO:0071855">
    <property type="term" value="F:neuropeptide receptor binding"/>
    <property type="evidence" value="ECO:0000353"/>
    <property type="project" value="FlyBase"/>
</dbReference>
<dbReference type="GO" id="GO:0005102">
    <property type="term" value="F:signaling receptor binding"/>
    <property type="evidence" value="ECO:0000303"/>
    <property type="project" value="UniProtKB"/>
</dbReference>
<dbReference type="GO" id="GO:0045968">
    <property type="term" value="P:negative regulation of juvenile hormone biosynthetic process"/>
    <property type="evidence" value="ECO:0000303"/>
    <property type="project" value="UniProtKB"/>
</dbReference>
<dbReference type="GO" id="GO:0007218">
    <property type="term" value="P:neuropeptide signaling pathway"/>
    <property type="evidence" value="ECO:0000314"/>
    <property type="project" value="FlyBase"/>
</dbReference>
<dbReference type="InterPro" id="IPR010276">
    <property type="entry name" value="Allatostatin"/>
</dbReference>
<dbReference type="Pfam" id="PF05953">
    <property type="entry name" value="Allatostatin"/>
    <property type="match status" value="4"/>
</dbReference>
<organism>
    <name type="scientific">Drosophila melanogaster</name>
    <name type="common">Fruit fly</name>
    <dbReference type="NCBI Taxonomy" id="7227"/>
    <lineage>
        <taxon>Eukaryota</taxon>
        <taxon>Metazoa</taxon>
        <taxon>Ecdysozoa</taxon>
        <taxon>Arthropoda</taxon>
        <taxon>Hexapoda</taxon>
        <taxon>Insecta</taxon>
        <taxon>Pterygota</taxon>
        <taxon>Neoptera</taxon>
        <taxon>Endopterygota</taxon>
        <taxon>Diptera</taxon>
        <taxon>Brachycera</taxon>
        <taxon>Muscomorpha</taxon>
        <taxon>Ephydroidea</taxon>
        <taxon>Drosophilidae</taxon>
        <taxon>Drosophila</taxon>
        <taxon>Sophophora</taxon>
    </lineage>
</organism>
<feature type="signal peptide" evidence="2">
    <location>
        <begin position="1"/>
        <end position="21"/>
    </location>
</feature>
<feature type="propeptide" id="PRO_0000001147">
    <location>
        <begin position="22"/>
        <end position="54"/>
    </location>
</feature>
<feature type="peptide" id="PRO_0000001148" description="Drostatin-1" evidence="5">
    <location>
        <begin position="57"/>
        <end position="64"/>
    </location>
</feature>
<feature type="peptide" id="PRO_0000001149" description="Drostatin-5" evidence="5">
    <location>
        <begin position="68"/>
        <end position="78"/>
    </location>
</feature>
<feature type="peptide" id="PRO_0000001150" description="Drostatin-2" evidence="5">
    <location>
        <begin position="81"/>
        <end position="88"/>
    </location>
</feature>
<feature type="peptide" id="PRO_0000001151" description="Drostatin-3" evidence="5">
    <location>
        <begin position="92"/>
        <end position="99"/>
    </location>
</feature>
<feature type="propeptide" id="PRO_0000001152">
    <location>
        <begin position="103"/>
        <end position="135"/>
    </location>
</feature>
<feature type="peptide" id="PRO_0000001153" description="Drostatin-4" evidence="5">
    <location>
        <begin position="138"/>
        <end position="148"/>
    </location>
</feature>
<feature type="region of interest" description="Disordered" evidence="3">
    <location>
        <begin position="131"/>
        <end position="151"/>
    </location>
</feature>
<feature type="modified residue" description="Leucine amide" evidence="5">
    <location>
        <position position="64"/>
    </location>
</feature>
<feature type="modified residue" description="Leucine amide" evidence="5">
    <location>
        <position position="88"/>
    </location>
</feature>
<feature type="modified residue" description="Leucine amide" evidence="4 5">
    <location>
        <position position="99"/>
    </location>
</feature>
<feature type="modified residue" description="Leucine amide" evidence="4 5">
    <location>
        <position position="148"/>
    </location>
</feature>
<feature type="sequence conflict" description="In Ref. 1; AAF97792." evidence="7" ref="1">
    <original>L</original>
    <variation>I</variation>
    <location>
        <position position="9"/>
    </location>
</feature>
<feature type="sequence conflict" description="In Ref. 1; AAF97792." evidence="7" ref="1">
    <original>C</original>
    <variation>G</variation>
    <location>
        <position position="15"/>
    </location>
</feature>
<proteinExistence type="evidence at protein level"/>
<comment type="function">
    <text evidence="1">May act as a neurotransmitter or neuromodulator.</text>
</comment>
<comment type="subcellular location">
    <subcellularLocation>
        <location evidence="1">Secreted</location>
    </subcellularLocation>
</comment>
<comment type="mass spectrometry" mass="953.52" method="MALDI" evidence="5">
    <molecule>Drostatin-1</molecule>
</comment>
<comment type="mass spectrometry" mass="1161.47" method="MALDI" evidence="5">
    <molecule>Drostatin-5</molecule>
</comment>
<comment type="mass spectrometry" mass="921.52" method="MALDI" evidence="5">
    <molecule>Drostatin-2</molecule>
</comment>
<comment type="mass spectrometry" mass="925.49" method="MALDI" evidence="5">
    <molecule>Drostatin-3</molecule>
</comment>
<comment type="mass spectrometry" mass="1276.68" method="MALDI" evidence="5">
    <molecule>Drostatin-4</molecule>
</comment>
<comment type="similarity">
    <text evidence="7">Belongs to the allatostatin family.</text>
</comment>